<gene>
    <name type="primary">OGN</name>
</gene>
<keyword id="KW-1015">Disulfide bond</keyword>
<keyword id="KW-0272">Extracellular matrix</keyword>
<keyword id="KW-0325">Glycoprotein</keyword>
<keyword id="KW-0339">Growth factor</keyword>
<keyword id="KW-0433">Leucine-rich repeat</keyword>
<keyword id="KW-0654">Proteoglycan</keyword>
<keyword id="KW-1185">Reference proteome</keyword>
<keyword id="KW-0677">Repeat</keyword>
<keyword id="KW-0964">Secreted</keyword>
<keyword id="KW-0732">Signal</keyword>
<comment type="function">
    <text evidence="1">Induces bone formation in conjunction with TGF-beta-1 or TGF-beta-2.</text>
</comment>
<comment type="subcellular location">
    <subcellularLocation>
        <location evidence="2">Secreted</location>
        <location evidence="2">Extracellular space</location>
        <location evidence="2">Extracellular matrix</location>
    </subcellularLocation>
</comment>
<comment type="tissue specificity">
    <text evidence="4">Expressed in many tissues.</text>
</comment>
<comment type="PTM">
    <text evidence="1">Contains keratan sulfate.</text>
</comment>
<comment type="similarity">
    <text evidence="5">Belongs to the small leucine-rich proteoglycan (SLRP) family. SLRP class III subfamily.</text>
</comment>
<sequence>MKTLQATFFLVAFVPLVKPAPPIQQDSPKFYEYDTDIVTGSLIQQDYEMLPKDAIKDGTNVSLDTGLRLQADDSELSARPTKDTNLPTCLLCVCLSGSVYCEEIDIEAVPPLPKETAYLYARFNKIKRIAVSDFADITTLRRIDFSGNMIEEIEDGAFSKLLLLEELSLAENRLVKLPVLPPKLTTFNANQNRIKSRGIKNNAFKKLTNLAYLYLGHNALESVPLNLPESLRILHLQHNNITTITDDTFCKSNNTRYIRTRMDEIRMEGNPILLAKHVNAFSCLKTLPVGTYY</sequence>
<proteinExistence type="evidence at transcript level"/>
<reference key="1">
    <citation type="journal article" date="2000" name="Matrix Biol.">
        <title>Molecular cloning and relative tissue expression of keratocan and mimecan in embryonic quail cornea.</title>
        <authorList>
            <person name="Corpuz L.M."/>
            <person name="Dunlevy J.R."/>
            <person name="Hassell J.R."/>
            <person name="Conrad A.H."/>
            <person name="Conrad G.W."/>
        </authorList>
    </citation>
    <scope>NUCLEOTIDE SEQUENCE [MRNA]</scope>
    <scope>TISSUE SPECIFICITY</scope>
    <source>
        <tissue>Cornea</tissue>
        <tissue>Sclera</tissue>
    </source>
</reference>
<evidence type="ECO:0000250" key="1">
    <source>
        <dbReference type="UniProtKB" id="P19879"/>
    </source>
</evidence>
<evidence type="ECO:0000250" key="2">
    <source>
        <dbReference type="UniProtKB" id="Q8MJF1"/>
    </source>
</evidence>
<evidence type="ECO:0000255" key="3"/>
<evidence type="ECO:0000269" key="4">
    <source>
    </source>
</evidence>
<evidence type="ECO:0000305" key="5"/>
<protein>
    <recommendedName>
        <fullName>Mimecan</fullName>
    </recommendedName>
    <alternativeName>
        <fullName>Osteoglycin</fullName>
    </alternativeName>
</protein>
<feature type="signal peptide" evidence="3">
    <location>
        <begin position="1"/>
        <end position="19"/>
    </location>
</feature>
<feature type="chain" id="PRO_0000032763" description="Mimecan">
    <location>
        <begin position="20"/>
        <end position="293"/>
    </location>
</feature>
<feature type="repeat" description="LRR 1">
    <location>
        <begin position="107"/>
        <end position="126"/>
    </location>
</feature>
<feature type="repeat" description="LRR 2">
    <location>
        <begin position="127"/>
        <end position="150"/>
    </location>
</feature>
<feature type="repeat" description="LRR 3">
    <location>
        <begin position="151"/>
        <end position="174"/>
    </location>
</feature>
<feature type="repeat" description="LRR 4">
    <location>
        <begin position="175"/>
        <end position="194"/>
    </location>
</feature>
<feature type="repeat" description="LRR 5">
    <location>
        <begin position="195"/>
        <end position="220"/>
    </location>
</feature>
<feature type="repeat" description="LRR 6">
    <location>
        <begin position="221"/>
        <end position="241"/>
    </location>
</feature>
<feature type="repeat" description="LRR 7">
    <location>
        <begin position="242"/>
        <end position="272"/>
    </location>
</feature>
<feature type="glycosylation site" description="N-linked (GlcNAc...) asparagine" evidence="3">
    <location>
        <position position="60"/>
    </location>
</feature>
<feature type="glycosylation site" description="N-linked (GlcNAc...) asparagine" evidence="3">
    <location>
        <position position="240"/>
    </location>
</feature>
<feature type="glycosylation site" description="N-linked (GlcNAc...) asparagine" evidence="3">
    <location>
        <position position="253"/>
    </location>
</feature>
<feature type="disulfide bond" evidence="1">
    <location>
        <begin position="250"/>
        <end position="283"/>
    </location>
</feature>
<name>MIME_COTJA</name>
<dbReference type="EMBL" id="AF128224">
    <property type="protein sequence ID" value="AAG48157.1"/>
    <property type="molecule type" value="mRNA"/>
</dbReference>
<dbReference type="RefSeq" id="NP_001310151.1">
    <property type="nucleotide sequence ID" value="NM_001323222.1"/>
</dbReference>
<dbReference type="SMR" id="Q9DE65"/>
<dbReference type="GlyCosmos" id="Q9DE65">
    <property type="glycosylation" value="3 sites, No reported glycans"/>
</dbReference>
<dbReference type="GeneID" id="107319663"/>
<dbReference type="KEGG" id="cjo:107319663"/>
<dbReference type="CTD" id="4969"/>
<dbReference type="OrthoDB" id="7451790at2759"/>
<dbReference type="Proteomes" id="UP000694412">
    <property type="component" value="Unplaced"/>
</dbReference>
<dbReference type="GO" id="GO:0031012">
    <property type="term" value="C:extracellular matrix"/>
    <property type="evidence" value="ECO:0007669"/>
    <property type="project" value="TreeGrafter"/>
</dbReference>
<dbReference type="GO" id="GO:0005615">
    <property type="term" value="C:extracellular space"/>
    <property type="evidence" value="ECO:0007669"/>
    <property type="project" value="TreeGrafter"/>
</dbReference>
<dbReference type="GO" id="GO:0008083">
    <property type="term" value="F:growth factor activity"/>
    <property type="evidence" value="ECO:0007669"/>
    <property type="project" value="UniProtKB-KW"/>
</dbReference>
<dbReference type="GO" id="GO:0061975">
    <property type="term" value="P:articular cartilage development"/>
    <property type="evidence" value="ECO:0007669"/>
    <property type="project" value="TreeGrafter"/>
</dbReference>
<dbReference type="GO" id="GO:0060348">
    <property type="term" value="P:bone development"/>
    <property type="evidence" value="ECO:0007669"/>
    <property type="project" value="TreeGrafter"/>
</dbReference>
<dbReference type="Gene3D" id="3.80.10.10">
    <property type="entry name" value="Ribonuclease Inhibitor"/>
    <property type="match status" value="1"/>
</dbReference>
<dbReference type="InterPro" id="IPR001611">
    <property type="entry name" value="Leu-rich_rpt"/>
</dbReference>
<dbReference type="InterPro" id="IPR003591">
    <property type="entry name" value="Leu-rich_rpt_typical-subtyp"/>
</dbReference>
<dbReference type="InterPro" id="IPR032675">
    <property type="entry name" value="LRR_dom_sf"/>
</dbReference>
<dbReference type="InterPro" id="IPR043547">
    <property type="entry name" value="Mimecan/Epiphycan/Opticin"/>
</dbReference>
<dbReference type="PANTHER" id="PTHR46269">
    <property type="entry name" value="EPIPHYCAN-RELATED"/>
    <property type="match status" value="1"/>
</dbReference>
<dbReference type="PANTHER" id="PTHR46269:SF1">
    <property type="entry name" value="MIMECAN"/>
    <property type="match status" value="1"/>
</dbReference>
<dbReference type="Pfam" id="PF00560">
    <property type="entry name" value="LRR_1"/>
    <property type="match status" value="1"/>
</dbReference>
<dbReference type="Pfam" id="PF13855">
    <property type="entry name" value="LRR_8"/>
    <property type="match status" value="1"/>
</dbReference>
<dbReference type="SMART" id="SM00369">
    <property type="entry name" value="LRR_TYP"/>
    <property type="match status" value="4"/>
</dbReference>
<dbReference type="SUPFAM" id="SSF52058">
    <property type="entry name" value="L domain-like"/>
    <property type="match status" value="1"/>
</dbReference>
<dbReference type="PROSITE" id="PS51450">
    <property type="entry name" value="LRR"/>
    <property type="match status" value="4"/>
</dbReference>
<accession>Q9DE65</accession>
<organism>
    <name type="scientific">Coturnix japonica</name>
    <name type="common">Japanese quail</name>
    <name type="synonym">Coturnix coturnix japonica</name>
    <dbReference type="NCBI Taxonomy" id="93934"/>
    <lineage>
        <taxon>Eukaryota</taxon>
        <taxon>Metazoa</taxon>
        <taxon>Chordata</taxon>
        <taxon>Craniata</taxon>
        <taxon>Vertebrata</taxon>
        <taxon>Euteleostomi</taxon>
        <taxon>Archelosauria</taxon>
        <taxon>Archosauria</taxon>
        <taxon>Dinosauria</taxon>
        <taxon>Saurischia</taxon>
        <taxon>Theropoda</taxon>
        <taxon>Coelurosauria</taxon>
        <taxon>Aves</taxon>
        <taxon>Neognathae</taxon>
        <taxon>Galloanserae</taxon>
        <taxon>Galliformes</taxon>
        <taxon>Phasianidae</taxon>
        <taxon>Perdicinae</taxon>
        <taxon>Coturnix</taxon>
    </lineage>
</organism>